<reference key="1">
    <citation type="submission" date="2007-04" db="EMBL/GenBank/DDBJ databases">
        <title>Complete sequence of Shewanella putrefaciens CN-32.</title>
        <authorList>
            <consortium name="US DOE Joint Genome Institute"/>
            <person name="Copeland A."/>
            <person name="Lucas S."/>
            <person name="Lapidus A."/>
            <person name="Barry K."/>
            <person name="Detter J.C."/>
            <person name="Glavina del Rio T."/>
            <person name="Hammon N."/>
            <person name="Israni S."/>
            <person name="Dalin E."/>
            <person name="Tice H."/>
            <person name="Pitluck S."/>
            <person name="Chain P."/>
            <person name="Malfatti S."/>
            <person name="Shin M."/>
            <person name="Vergez L."/>
            <person name="Schmutz J."/>
            <person name="Larimer F."/>
            <person name="Land M."/>
            <person name="Hauser L."/>
            <person name="Kyrpides N."/>
            <person name="Mikhailova N."/>
            <person name="Romine M.F."/>
            <person name="Fredrickson J."/>
            <person name="Tiedje J."/>
            <person name="Richardson P."/>
        </authorList>
    </citation>
    <scope>NUCLEOTIDE SEQUENCE [LARGE SCALE GENOMIC DNA]</scope>
    <source>
        <strain>CN-32 / ATCC BAA-453</strain>
    </source>
</reference>
<proteinExistence type="inferred from homology"/>
<evidence type="ECO:0000255" key="1">
    <source>
        <dbReference type="HAMAP-Rule" id="MF_01628"/>
    </source>
</evidence>
<sequence length="443" mass="46903">MFLAQEIIRKKRNGLALSPAEIQFFVQGITTNAVSEGQIAAFGMAVYFNDMNMDERIALTTAMRDSGTVLNWQSLGLNGPVIDKHSTGGVGDVISLMLGPMAAACGGYVPMISGRGLGHTGGTLDKFDAIPGYQTEPSSELFRKVVKEVGVAIIGQTGDLVPADKRFYSIRDNTATVESISLITASILSKKLACNLDALAMDVKVGSGAFMPTYEASEELARSITAVANGAGTKTTALLTDMNQVLASCAGNAVEVKEAIDFLTGAYRNPRLYEVTMGLCAEMLLLGGLASNETEARAKLNRVLDNGRAAEIFGKMVSGLGGPVDFVENYSKYLPQSQIIRPVFADAKGYAYSMDTRELGLAVVTLGGGRRKPGDALDYSVGLTQVCALGDKIDSSTPIAVIHAQSEAAFTEAENAVKKAIHIGETAPEKTPEIYAYIRAADL</sequence>
<feature type="chain" id="PRO_1000069671" description="Thymidine phosphorylase">
    <location>
        <begin position="1"/>
        <end position="443"/>
    </location>
</feature>
<accession>A4Y9A7</accession>
<gene>
    <name evidence="1" type="primary">deoA</name>
    <name type="ordered locus">Sputcn32_2821</name>
</gene>
<keyword id="KW-0328">Glycosyltransferase</keyword>
<keyword id="KW-0808">Transferase</keyword>
<protein>
    <recommendedName>
        <fullName evidence="1">Thymidine phosphorylase</fullName>
        <ecNumber evidence="1">2.4.2.4</ecNumber>
    </recommendedName>
    <alternativeName>
        <fullName evidence="1">TdRPase</fullName>
    </alternativeName>
</protein>
<name>TYPH_SHEPC</name>
<comment type="function">
    <text evidence="1">The enzymes which catalyze the reversible phosphorolysis of pyrimidine nucleosides are involved in the degradation of these compounds and in their utilization as carbon and energy sources, or in the rescue of pyrimidine bases for nucleotide synthesis.</text>
</comment>
<comment type="catalytic activity">
    <reaction evidence="1">
        <text>thymidine + phosphate = 2-deoxy-alpha-D-ribose 1-phosphate + thymine</text>
        <dbReference type="Rhea" id="RHEA:16037"/>
        <dbReference type="ChEBI" id="CHEBI:17748"/>
        <dbReference type="ChEBI" id="CHEBI:17821"/>
        <dbReference type="ChEBI" id="CHEBI:43474"/>
        <dbReference type="ChEBI" id="CHEBI:57259"/>
        <dbReference type="EC" id="2.4.2.4"/>
    </reaction>
</comment>
<comment type="pathway">
    <text evidence="1">Pyrimidine metabolism; dTMP biosynthesis via salvage pathway; dTMP from thymine: step 1/2.</text>
</comment>
<comment type="subunit">
    <text evidence="1">Homodimer.</text>
</comment>
<comment type="similarity">
    <text evidence="1">Belongs to the thymidine/pyrimidine-nucleoside phosphorylase family.</text>
</comment>
<dbReference type="EC" id="2.4.2.4" evidence="1"/>
<dbReference type="EMBL" id="CP000681">
    <property type="protein sequence ID" value="ABP76540.1"/>
    <property type="molecule type" value="Genomic_DNA"/>
</dbReference>
<dbReference type="SMR" id="A4Y9A7"/>
<dbReference type="STRING" id="319224.Sputcn32_2821"/>
<dbReference type="KEGG" id="spc:Sputcn32_2821"/>
<dbReference type="eggNOG" id="COG0213">
    <property type="taxonomic scope" value="Bacteria"/>
</dbReference>
<dbReference type="HOGENOM" id="CLU_025040_0_1_6"/>
<dbReference type="UniPathway" id="UPA00578">
    <property type="reaction ID" value="UER00638"/>
</dbReference>
<dbReference type="GO" id="GO:0005829">
    <property type="term" value="C:cytosol"/>
    <property type="evidence" value="ECO:0007669"/>
    <property type="project" value="TreeGrafter"/>
</dbReference>
<dbReference type="GO" id="GO:0004645">
    <property type="term" value="F:1,4-alpha-oligoglucan phosphorylase activity"/>
    <property type="evidence" value="ECO:0007669"/>
    <property type="project" value="InterPro"/>
</dbReference>
<dbReference type="GO" id="GO:0009032">
    <property type="term" value="F:thymidine phosphorylase activity"/>
    <property type="evidence" value="ECO:0007669"/>
    <property type="project" value="UniProtKB-UniRule"/>
</dbReference>
<dbReference type="GO" id="GO:0006206">
    <property type="term" value="P:pyrimidine nucleobase metabolic process"/>
    <property type="evidence" value="ECO:0007669"/>
    <property type="project" value="InterPro"/>
</dbReference>
<dbReference type="GO" id="GO:0046104">
    <property type="term" value="P:thymidine metabolic process"/>
    <property type="evidence" value="ECO:0007669"/>
    <property type="project" value="UniProtKB-UniRule"/>
</dbReference>
<dbReference type="FunFam" id="3.40.1030.10:FF:000001">
    <property type="entry name" value="Thymidine phosphorylase"/>
    <property type="match status" value="1"/>
</dbReference>
<dbReference type="FunFam" id="3.90.1170.30:FF:000001">
    <property type="entry name" value="Thymidine phosphorylase"/>
    <property type="match status" value="1"/>
</dbReference>
<dbReference type="Gene3D" id="3.40.1030.10">
    <property type="entry name" value="Nucleoside phosphorylase/phosphoribosyltransferase catalytic domain"/>
    <property type="match status" value="1"/>
</dbReference>
<dbReference type="Gene3D" id="3.90.1170.30">
    <property type="entry name" value="Pyrimidine nucleoside phosphorylase-like, C-terminal domain"/>
    <property type="match status" value="1"/>
</dbReference>
<dbReference type="Gene3D" id="1.20.970.10">
    <property type="entry name" value="Transferase, Pyrimidine Nucleoside Phosphorylase, Chain C"/>
    <property type="match status" value="1"/>
</dbReference>
<dbReference type="HAMAP" id="MF_01628">
    <property type="entry name" value="Thymid_phosp"/>
    <property type="match status" value="1"/>
</dbReference>
<dbReference type="InterPro" id="IPR000312">
    <property type="entry name" value="Glycosyl_Trfase_fam3"/>
</dbReference>
<dbReference type="InterPro" id="IPR017459">
    <property type="entry name" value="Glycosyl_Trfase_fam3_N_dom"/>
</dbReference>
<dbReference type="InterPro" id="IPR036320">
    <property type="entry name" value="Glycosyl_Trfase_fam3_N_dom_sf"/>
</dbReference>
<dbReference type="InterPro" id="IPR035902">
    <property type="entry name" value="Nuc_phospho_transferase"/>
</dbReference>
<dbReference type="InterPro" id="IPR036566">
    <property type="entry name" value="PYNP-like_C_sf"/>
</dbReference>
<dbReference type="InterPro" id="IPR013102">
    <property type="entry name" value="PYNP_C"/>
</dbReference>
<dbReference type="InterPro" id="IPR018090">
    <property type="entry name" value="Pyrmidine_PPas_bac/euk"/>
</dbReference>
<dbReference type="InterPro" id="IPR017872">
    <property type="entry name" value="Pyrmidine_PPase_CS"/>
</dbReference>
<dbReference type="InterPro" id="IPR000053">
    <property type="entry name" value="Thymidine/pyrmidine_PPase"/>
</dbReference>
<dbReference type="InterPro" id="IPR013465">
    <property type="entry name" value="Thymidine_Pase"/>
</dbReference>
<dbReference type="NCBIfam" id="NF004490">
    <property type="entry name" value="PRK05820.1"/>
    <property type="match status" value="1"/>
</dbReference>
<dbReference type="NCBIfam" id="TIGR02643">
    <property type="entry name" value="T_phosphoryl"/>
    <property type="match status" value="1"/>
</dbReference>
<dbReference type="NCBIfam" id="TIGR02644">
    <property type="entry name" value="Y_phosphoryl"/>
    <property type="match status" value="1"/>
</dbReference>
<dbReference type="PANTHER" id="PTHR10515">
    <property type="entry name" value="THYMIDINE PHOSPHORYLASE"/>
    <property type="match status" value="1"/>
</dbReference>
<dbReference type="PANTHER" id="PTHR10515:SF0">
    <property type="entry name" value="THYMIDINE PHOSPHORYLASE"/>
    <property type="match status" value="1"/>
</dbReference>
<dbReference type="Pfam" id="PF02885">
    <property type="entry name" value="Glycos_trans_3N"/>
    <property type="match status" value="1"/>
</dbReference>
<dbReference type="Pfam" id="PF00591">
    <property type="entry name" value="Glycos_transf_3"/>
    <property type="match status" value="1"/>
</dbReference>
<dbReference type="Pfam" id="PF07831">
    <property type="entry name" value="PYNP_C"/>
    <property type="match status" value="1"/>
</dbReference>
<dbReference type="PIRSF" id="PIRSF000478">
    <property type="entry name" value="TP_PyNP"/>
    <property type="match status" value="1"/>
</dbReference>
<dbReference type="SMART" id="SM00941">
    <property type="entry name" value="PYNP_C"/>
    <property type="match status" value="1"/>
</dbReference>
<dbReference type="SUPFAM" id="SSF52418">
    <property type="entry name" value="Nucleoside phosphorylase/phosphoribosyltransferase catalytic domain"/>
    <property type="match status" value="1"/>
</dbReference>
<dbReference type="SUPFAM" id="SSF47648">
    <property type="entry name" value="Nucleoside phosphorylase/phosphoribosyltransferase N-terminal domain"/>
    <property type="match status" value="1"/>
</dbReference>
<dbReference type="SUPFAM" id="SSF54680">
    <property type="entry name" value="Pyrimidine nucleoside phosphorylase C-terminal domain"/>
    <property type="match status" value="1"/>
</dbReference>
<dbReference type="PROSITE" id="PS00647">
    <property type="entry name" value="THYMID_PHOSPHORYLASE"/>
    <property type="match status" value="1"/>
</dbReference>
<organism>
    <name type="scientific">Shewanella putrefaciens (strain CN-32 / ATCC BAA-453)</name>
    <dbReference type="NCBI Taxonomy" id="319224"/>
    <lineage>
        <taxon>Bacteria</taxon>
        <taxon>Pseudomonadati</taxon>
        <taxon>Pseudomonadota</taxon>
        <taxon>Gammaproteobacteria</taxon>
        <taxon>Alteromonadales</taxon>
        <taxon>Shewanellaceae</taxon>
        <taxon>Shewanella</taxon>
    </lineage>
</organism>